<dbReference type="EC" id="1.3.-.-" evidence="1"/>
<dbReference type="EMBL" id="CP001398">
    <property type="protein sequence ID" value="ACS33807.1"/>
    <property type="molecule type" value="Genomic_DNA"/>
</dbReference>
<dbReference type="RefSeq" id="WP_015858919.1">
    <property type="nucleotide sequence ID" value="NC_012804.1"/>
</dbReference>
<dbReference type="SMR" id="C5A6E5"/>
<dbReference type="STRING" id="593117.TGAM_1305"/>
<dbReference type="PaxDb" id="593117-TGAM_1305"/>
<dbReference type="GeneID" id="7988364"/>
<dbReference type="KEGG" id="tga:TGAM_1305"/>
<dbReference type="PATRIC" id="fig|593117.10.peg.1303"/>
<dbReference type="eggNOG" id="arCOG00570">
    <property type="taxonomic scope" value="Archaea"/>
</dbReference>
<dbReference type="HOGENOM" id="CLU_024648_0_0_2"/>
<dbReference type="OrthoDB" id="6062at2157"/>
<dbReference type="UniPathway" id="UPA00940"/>
<dbReference type="Proteomes" id="UP000001488">
    <property type="component" value="Chromosome"/>
</dbReference>
<dbReference type="GO" id="GO:0016020">
    <property type="term" value="C:membrane"/>
    <property type="evidence" value="ECO:0007669"/>
    <property type="project" value="GOC"/>
</dbReference>
<dbReference type="GO" id="GO:0050660">
    <property type="term" value="F:flavin adenine dinucleotide binding"/>
    <property type="evidence" value="ECO:0007669"/>
    <property type="project" value="UniProtKB-UniRule"/>
</dbReference>
<dbReference type="GO" id="GO:0045550">
    <property type="term" value="F:geranylgeranyl reductase activity"/>
    <property type="evidence" value="ECO:0007669"/>
    <property type="project" value="InterPro"/>
</dbReference>
<dbReference type="GO" id="GO:0016628">
    <property type="term" value="F:oxidoreductase activity, acting on the CH-CH group of donors, NAD or NADP as acceptor"/>
    <property type="evidence" value="ECO:0007669"/>
    <property type="project" value="InterPro"/>
</dbReference>
<dbReference type="GO" id="GO:0046474">
    <property type="term" value="P:glycerophospholipid biosynthetic process"/>
    <property type="evidence" value="ECO:0007669"/>
    <property type="project" value="UniProtKB-UniRule"/>
</dbReference>
<dbReference type="GO" id="GO:0046467">
    <property type="term" value="P:membrane lipid biosynthetic process"/>
    <property type="evidence" value="ECO:0007669"/>
    <property type="project" value="InterPro"/>
</dbReference>
<dbReference type="Gene3D" id="3.30.9.10">
    <property type="entry name" value="D-Amino Acid Oxidase, subunit A, domain 2"/>
    <property type="match status" value="1"/>
</dbReference>
<dbReference type="Gene3D" id="3.50.50.60">
    <property type="entry name" value="FAD/NAD(P)-binding domain"/>
    <property type="match status" value="1"/>
</dbReference>
<dbReference type="HAMAP" id="MF_01287">
    <property type="entry name" value="DGGGPL_reductase"/>
    <property type="match status" value="1"/>
</dbReference>
<dbReference type="InterPro" id="IPR023590">
    <property type="entry name" value="DGGGPL_reductase"/>
</dbReference>
<dbReference type="InterPro" id="IPR036188">
    <property type="entry name" value="FAD/NAD-bd_sf"/>
</dbReference>
<dbReference type="InterPro" id="IPR011777">
    <property type="entry name" value="Geranylgeranyl_Rdtase_fam"/>
</dbReference>
<dbReference type="InterPro" id="IPR050407">
    <property type="entry name" value="Geranylgeranyl_reductase"/>
</dbReference>
<dbReference type="InterPro" id="IPR054715">
    <property type="entry name" value="GGR_cat"/>
</dbReference>
<dbReference type="NCBIfam" id="TIGR02032">
    <property type="entry name" value="GG-red-SF"/>
    <property type="match status" value="1"/>
</dbReference>
<dbReference type="PANTHER" id="PTHR42685:SF18">
    <property type="entry name" value="DIGERANYLGERANYLGLYCEROPHOSPHOLIPID REDUCTASE"/>
    <property type="match status" value="1"/>
</dbReference>
<dbReference type="PANTHER" id="PTHR42685">
    <property type="entry name" value="GERANYLGERANYL DIPHOSPHATE REDUCTASE"/>
    <property type="match status" value="1"/>
</dbReference>
<dbReference type="Pfam" id="PF12831">
    <property type="entry name" value="FAD_oxidored"/>
    <property type="match status" value="1"/>
</dbReference>
<dbReference type="Pfam" id="PF22578">
    <property type="entry name" value="GGR_cat"/>
    <property type="match status" value="1"/>
</dbReference>
<dbReference type="PRINTS" id="PR00420">
    <property type="entry name" value="RNGMNOXGNASE"/>
</dbReference>
<dbReference type="SUPFAM" id="SSF51905">
    <property type="entry name" value="FAD/NAD(P)-binding domain"/>
    <property type="match status" value="1"/>
</dbReference>
<sequence length="395" mass="44083">MSWKYDVVVVGAGIAGPIVARNVARAGFSVLLIDKKWAIGTPKQCAEGISIKVFEKYDIPYDKRFINREIYGAKLYSPSGYELEMRYKDVSGVILERKVFDKMLAYYAAKAGADVLARTEALDVIRKDGKVVGIKAKHEDEPIEIYADVIVAADGVESTIARKAGINTYAPPHEFDSSYEYEMLIEGFDPDLIHLWFGNEIAPRGYVWVFPKDEDRANVGIGINSDNPQTAKYYLDKWLKENNIPAKKLLEINVGVVPVGGFVKELVKNNVLVVGDAARQVNPMHGGGMAEAMEAGTIASKWIVKALEEENLSLLQNYTKEWWETDGKRLEKVLKVRRVTEKLTDEDLDLFIQVLSGADAEKIAGGDYGEVIKALLKHPKVLMSKRRLSLLKSLL</sequence>
<keyword id="KW-0274">FAD</keyword>
<keyword id="KW-0285">Flavoprotein</keyword>
<keyword id="KW-0444">Lipid biosynthesis</keyword>
<keyword id="KW-0443">Lipid metabolism</keyword>
<keyword id="KW-0560">Oxidoreductase</keyword>
<keyword id="KW-0594">Phospholipid biosynthesis</keyword>
<keyword id="KW-1208">Phospholipid metabolism</keyword>
<keyword id="KW-1185">Reference proteome</keyword>
<feature type="chain" id="PRO_1000214212" description="Digeranylgeranylglycerophospholipid reductase">
    <location>
        <begin position="1"/>
        <end position="395"/>
    </location>
</feature>
<feature type="binding site" evidence="1">
    <location>
        <position position="15"/>
    </location>
    <ligand>
        <name>FAD</name>
        <dbReference type="ChEBI" id="CHEBI:57692"/>
    </ligand>
</feature>
<feature type="binding site" evidence="1">
    <location>
        <position position="34"/>
    </location>
    <ligand>
        <name>FAD</name>
        <dbReference type="ChEBI" id="CHEBI:57692"/>
    </ligand>
</feature>
<feature type="binding site" evidence="1">
    <location>
        <position position="45"/>
    </location>
    <ligand>
        <name>FAD</name>
        <dbReference type="ChEBI" id="CHEBI:57692"/>
    </ligand>
</feature>
<feature type="binding site" evidence="1">
    <location>
        <position position="46"/>
    </location>
    <ligand>
        <name>FAD</name>
        <dbReference type="ChEBI" id="CHEBI:57692"/>
    </ligand>
</feature>
<feature type="binding site" evidence="1">
    <location>
        <position position="48"/>
    </location>
    <ligand>
        <name>FAD</name>
        <dbReference type="ChEBI" id="CHEBI:57692"/>
    </ligand>
</feature>
<feature type="binding site" evidence="1">
    <location>
        <position position="97"/>
    </location>
    <ligand>
        <name>FAD</name>
        <dbReference type="ChEBI" id="CHEBI:57692"/>
    </ligand>
</feature>
<feature type="binding site" evidence="1">
    <location>
        <position position="121"/>
    </location>
    <ligand>
        <name>FAD</name>
        <dbReference type="ChEBI" id="CHEBI:57692"/>
    </ligand>
</feature>
<feature type="binding site" evidence="1">
    <location>
        <position position="276"/>
    </location>
    <ligand>
        <name>FAD</name>
        <dbReference type="ChEBI" id="CHEBI:57692"/>
    </ligand>
</feature>
<feature type="binding site" evidence="1">
    <location>
        <position position="288"/>
    </location>
    <ligand>
        <name>FAD</name>
        <dbReference type="ChEBI" id="CHEBI:57692"/>
    </ligand>
</feature>
<feature type="binding site" evidence="1">
    <location>
        <position position="329"/>
    </location>
    <ligand>
        <name>a 2,3-bis-O-(geranylgeranyl)-sn-glycerol 1-phospholipid</name>
        <dbReference type="ChEBI" id="CHEBI:138140"/>
    </ligand>
</feature>
<feature type="binding site" evidence="1">
    <location>
        <position position="365"/>
    </location>
    <ligand>
        <name>a 2,3-bis-O-(geranylgeranyl)-sn-glycerol 1-phospholipid</name>
        <dbReference type="ChEBI" id="CHEBI:138140"/>
    </ligand>
</feature>
<proteinExistence type="inferred from homology"/>
<gene>
    <name type="ordered locus">TGAM_1305</name>
</gene>
<reference key="1">
    <citation type="journal article" date="2007" name="Genome Biol.">
        <title>Genome analysis and genome-wide proteomics of Thermococcus gammatolerans, the most radioresistant organism known amongst the Archaea.</title>
        <authorList>
            <person name="Zivanovic Y."/>
            <person name="Armengaud J."/>
            <person name="Lagorce A."/>
            <person name="Leplat C."/>
            <person name="Guerin P."/>
            <person name="Dutertre M."/>
            <person name="Anthouard V."/>
            <person name="Forterre P."/>
            <person name="Wincker P."/>
            <person name="Confalonieri F."/>
        </authorList>
    </citation>
    <scope>NUCLEOTIDE SEQUENCE [LARGE SCALE GENOMIC DNA]</scope>
    <source>
        <strain>DSM 15229 / JCM 11827 / EJ3</strain>
    </source>
</reference>
<accession>C5A6E5</accession>
<evidence type="ECO:0000255" key="1">
    <source>
        <dbReference type="HAMAP-Rule" id="MF_01287"/>
    </source>
</evidence>
<protein>
    <recommendedName>
        <fullName evidence="1">Digeranylgeranylglycerophospholipid reductase</fullName>
        <shortName evidence="1">DGGGPL reductase</shortName>
        <ecNumber evidence="1">1.3.-.-</ecNumber>
    </recommendedName>
    <alternativeName>
        <fullName evidence="1">2,3-bis-O-geranylgeranylglyceryl phosphate reductase</fullName>
    </alternativeName>
    <alternativeName>
        <fullName evidence="1">Geranylgeranyl reductase</fullName>
        <shortName evidence="1">GGR</shortName>
    </alternativeName>
</protein>
<name>GGR_THEGJ</name>
<organism>
    <name type="scientific">Thermococcus gammatolerans (strain DSM 15229 / JCM 11827 / EJ3)</name>
    <dbReference type="NCBI Taxonomy" id="593117"/>
    <lineage>
        <taxon>Archaea</taxon>
        <taxon>Methanobacteriati</taxon>
        <taxon>Methanobacteriota</taxon>
        <taxon>Thermococci</taxon>
        <taxon>Thermococcales</taxon>
        <taxon>Thermococcaceae</taxon>
        <taxon>Thermococcus</taxon>
    </lineage>
</organism>
<comment type="function">
    <text evidence="1">Is involved in the reduction of 2,3-digeranylgeranylglycerophospholipids (unsaturated archaeols) into 2,3-diphytanylglycerophospholipids (saturated archaeols) in the biosynthesis of archaeal membrane lipids. Catalyzes the formation of archaetidic acid (2,3-di-O-phytanyl-sn-glyceryl phosphate) from 2,3-di-O-geranylgeranylglyceryl phosphate (DGGGP) via the hydrogenation of each double bond of the isoprenoid chains. Is also probably able to reduce double bonds of geranyl groups in CDP-2,3-bis-O-(geranylgeranyl)-sn-glycerol and archaetidylserine, thus acting at various stages in the biosynthesis of archaeal membrane lipids.</text>
</comment>
<comment type="catalytic activity">
    <reaction evidence="1">
        <text>a 2,3-bis-O-phytanyl-sn-glycerol 1-phospholipid + 8 A = a 2,3-bis-O-(geranylgeranyl)-sn-glycerol 1-phospholipid + 8 AH2</text>
        <dbReference type="Rhea" id="RHEA:64376"/>
        <dbReference type="ChEBI" id="CHEBI:13193"/>
        <dbReference type="ChEBI" id="CHEBI:17499"/>
        <dbReference type="ChEBI" id="CHEBI:138139"/>
        <dbReference type="ChEBI" id="CHEBI:138140"/>
    </reaction>
    <physiologicalReaction direction="right-to-left" evidence="1">
        <dbReference type="Rhea" id="RHEA:64378"/>
    </physiologicalReaction>
</comment>
<comment type="catalytic activity">
    <reaction evidence="1">
        <text>2,3-bis-O-(phytanyl)-sn-glycerol 1-phosphate + 8 A = 2,3-bis-O-(geranylgeranyl)-sn-glycerol 1-phosphate + 8 AH2</text>
        <dbReference type="Rhea" id="RHEA:64368"/>
        <dbReference type="ChEBI" id="CHEBI:13193"/>
        <dbReference type="ChEBI" id="CHEBI:17499"/>
        <dbReference type="ChEBI" id="CHEBI:58837"/>
        <dbReference type="ChEBI" id="CHEBI:73125"/>
    </reaction>
    <physiologicalReaction direction="right-to-left" evidence="1">
        <dbReference type="Rhea" id="RHEA:64370"/>
    </physiologicalReaction>
</comment>
<comment type="catalytic activity">
    <reaction evidence="1">
        <text>CDP-2,3-bis-O-(geranylgeranyl)-sn-glycerol + 8 AH2 = CDP-2,3-bis-O-(phytanyl)-sn-glycerol + 8 A</text>
        <dbReference type="Rhea" id="RHEA:84207"/>
        <dbReference type="ChEBI" id="CHEBI:13193"/>
        <dbReference type="ChEBI" id="CHEBI:17499"/>
        <dbReference type="ChEBI" id="CHEBI:58838"/>
        <dbReference type="ChEBI" id="CHEBI:74004"/>
    </reaction>
    <physiologicalReaction direction="left-to-right" evidence="1">
        <dbReference type="Rhea" id="RHEA:84208"/>
    </physiologicalReaction>
</comment>
<comment type="catalytic activity">
    <reaction evidence="1">
        <text>archaetidylserine + 8 AH2 = 2,3-bis-O-phytanyl-sn-glycero-3-phospho-L-serine + 8 A</text>
        <dbReference type="Rhea" id="RHEA:84215"/>
        <dbReference type="ChEBI" id="CHEBI:13193"/>
        <dbReference type="ChEBI" id="CHEBI:17499"/>
        <dbReference type="ChEBI" id="CHEBI:71517"/>
        <dbReference type="ChEBI" id="CHEBI:74853"/>
    </reaction>
    <physiologicalReaction direction="left-to-right" evidence="1">
        <dbReference type="Rhea" id="RHEA:84216"/>
    </physiologicalReaction>
</comment>
<comment type="cofactor">
    <cofactor evidence="1">
        <name>FAD</name>
        <dbReference type="ChEBI" id="CHEBI:57692"/>
    </cofactor>
    <text evidence="1">Binds 1 FAD per subunit.</text>
</comment>
<comment type="pathway">
    <text evidence="1">Membrane lipid metabolism; glycerophospholipid metabolism.</text>
</comment>
<comment type="miscellaneous">
    <text evidence="1">Reduction reaction proceeds via syn addition of hydrogen for double bonds.</text>
</comment>
<comment type="similarity">
    <text evidence="1">Belongs to the geranylgeranyl reductase family. DGGGPL reductase subfamily.</text>
</comment>